<keyword id="KW-0007">Acetylation</keyword>
<keyword id="KW-0963">Cytoplasm</keyword>
<keyword id="KW-0646">Protease inhibitor</keyword>
<keyword id="KW-1185">Reference proteome</keyword>
<keyword id="KW-0722">Serine protease inhibitor</keyword>
<proteinExistence type="evidence at transcript level"/>
<organism>
    <name type="scientific">Xenopus laevis</name>
    <name type="common">African clawed frog</name>
    <dbReference type="NCBI Taxonomy" id="8355"/>
    <lineage>
        <taxon>Eukaryota</taxon>
        <taxon>Metazoa</taxon>
        <taxon>Chordata</taxon>
        <taxon>Craniata</taxon>
        <taxon>Vertebrata</taxon>
        <taxon>Euteleostomi</taxon>
        <taxon>Amphibia</taxon>
        <taxon>Batrachia</taxon>
        <taxon>Anura</taxon>
        <taxon>Pipoidea</taxon>
        <taxon>Pipidae</taxon>
        <taxon>Xenopodinae</taxon>
        <taxon>Xenopus</taxon>
        <taxon>Xenopus</taxon>
    </lineage>
</organism>
<reference key="1">
    <citation type="submission" date="2005-04" db="EMBL/GenBank/DDBJ databases">
        <authorList>
            <consortium name="NIH - Xenopus Gene Collection (XGC) project"/>
        </authorList>
    </citation>
    <scope>NUCLEOTIDE SEQUENCE [LARGE SCALE MRNA]</scope>
    <source>
        <tissue>Brain</tissue>
    </source>
</reference>
<protein>
    <recommendedName>
        <fullName>Leukocyte elastase inhibitor</fullName>
    </recommendedName>
    <alternativeName>
        <fullName>Serpin B1</fullName>
    </alternativeName>
</protein>
<evidence type="ECO:0000250" key="1"/>
<evidence type="ECO:0000305" key="2"/>
<sequence>MENLSSACTHFCFDLFKKINENNSTGNLFFSPISLSTALAMVFLGTKGKTAEQMSKTLHFDAVKDLHSNFQTLNAEINKKDVSTYALNLANRLFGEKTFNFLPNFLSSVKKQYSADLGTVDFISALEDARKEINKWVSEQTKGKIPEVLSTGTVDRSTKLVLVNAIYFKGDWAKKFNAEHTTDMPFQLNKKEQKTVKMMYQKEKLPFNYIPDINCRILELPYVDYELSMIIILPDNINDDTTGLQQLEKELSLEKIHEWTENMMPTDVHIHLPKFKLEDSYKLKSQLAGMGMVDLFNSGSADLSGMSGSNNLFLSEVIHKSFVEVNEEGTEAAAASAGIAMMCMMREEEFNADHPFLFLIRHNATKSILFFGRYSSP</sequence>
<feature type="chain" id="PRO_0000289124" description="Leukocyte elastase inhibitor">
    <location>
        <begin position="1"/>
        <end position="377"/>
    </location>
</feature>
<feature type="site" description="Reactive bond" evidence="1">
    <location>
        <begin position="344"/>
        <end position="345"/>
    </location>
</feature>
<feature type="modified residue" description="N-acetylmethionine" evidence="1">
    <location>
        <position position="1"/>
    </location>
</feature>
<gene>
    <name type="primary">serpinb1</name>
</gene>
<comment type="function">
    <text evidence="1">Regulates the activity of the neutrophil proteases.</text>
</comment>
<comment type="subcellular location">
    <subcellularLocation>
        <location evidence="1">Cytoplasm</location>
    </subcellularLocation>
</comment>
<comment type="similarity">
    <text evidence="2">Belongs to the serpin family. Ov-serpin subfamily.</text>
</comment>
<dbReference type="EMBL" id="BC094073">
    <property type="protein sequence ID" value="AAH94073.1"/>
    <property type="molecule type" value="mRNA"/>
</dbReference>
<dbReference type="RefSeq" id="NP_001089382.1">
    <property type="nucleotide sequence ID" value="NM_001095913.1"/>
</dbReference>
<dbReference type="RefSeq" id="XP_018122179.1">
    <property type="nucleotide sequence ID" value="XM_018266690.1"/>
</dbReference>
<dbReference type="SMR" id="Q52L45"/>
<dbReference type="BioGRID" id="592213">
    <property type="interactions" value="1"/>
</dbReference>
<dbReference type="MEROPS" id="I04.006"/>
<dbReference type="DNASU" id="734432"/>
<dbReference type="GeneID" id="734432"/>
<dbReference type="KEGG" id="xla:734432"/>
<dbReference type="AGR" id="Xenbase:XB-GENE-1217270"/>
<dbReference type="CTD" id="734432"/>
<dbReference type="Xenbase" id="XB-GENE-1217270">
    <property type="gene designation" value="serpinb1.L"/>
</dbReference>
<dbReference type="OrthoDB" id="671595at2759"/>
<dbReference type="Proteomes" id="UP000186698">
    <property type="component" value="Chromosome 6L"/>
</dbReference>
<dbReference type="Bgee" id="734432">
    <property type="expression patterns" value="Expressed in intestine and 20 other cell types or tissues"/>
</dbReference>
<dbReference type="GO" id="GO:0005737">
    <property type="term" value="C:cytoplasm"/>
    <property type="evidence" value="ECO:0007669"/>
    <property type="project" value="UniProtKB-SubCell"/>
</dbReference>
<dbReference type="GO" id="GO:0005615">
    <property type="term" value="C:extracellular space"/>
    <property type="evidence" value="ECO:0000318"/>
    <property type="project" value="GO_Central"/>
</dbReference>
<dbReference type="GO" id="GO:0004867">
    <property type="term" value="F:serine-type endopeptidase inhibitor activity"/>
    <property type="evidence" value="ECO:0000318"/>
    <property type="project" value="GO_Central"/>
</dbReference>
<dbReference type="CDD" id="cd19560">
    <property type="entry name" value="serpinB1_LEI"/>
    <property type="match status" value="1"/>
</dbReference>
<dbReference type="FunFam" id="3.30.497.10:FF:000001">
    <property type="entry name" value="Serine protease inhibitor"/>
    <property type="match status" value="1"/>
</dbReference>
<dbReference type="FunFam" id="2.10.310.10:FF:000001">
    <property type="entry name" value="Serpin family A member 1"/>
    <property type="match status" value="1"/>
</dbReference>
<dbReference type="FunFam" id="2.30.39.10:FF:000014">
    <property type="entry name" value="Serpin family B member 9"/>
    <property type="match status" value="1"/>
</dbReference>
<dbReference type="Gene3D" id="2.30.39.10">
    <property type="entry name" value="Alpha-1-antitrypsin, domain 1"/>
    <property type="match status" value="1"/>
</dbReference>
<dbReference type="Gene3D" id="3.30.497.10">
    <property type="entry name" value="Antithrombin, subunit I, domain 2"/>
    <property type="match status" value="1"/>
</dbReference>
<dbReference type="Gene3D" id="2.10.310.10">
    <property type="entry name" value="Serpins superfamily"/>
    <property type="match status" value="1"/>
</dbReference>
<dbReference type="InterPro" id="IPR023795">
    <property type="entry name" value="Serpin_CS"/>
</dbReference>
<dbReference type="InterPro" id="IPR023796">
    <property type="entry name" value="Serpin_dom"/>
</dbReference>
<dbReference type="InterPro" id="IPR000215">
    <property type="entry name" value="Serpin_fam"/>
</dbReference>
<dbReference type="InterPro" id="IPR036186">
    <property type="entry name" value="Serpin_sf"/>
</dbReference>
<dbReference type="InterPro" id="IPR042178">
    <property type="entry name" value="Serpin_sf_1"/>
</dbReference>
<dbReference type="InterPro" id="IPR042185">
    <property type="entry name" value="Serpin_sf_2"/>
</dbReference>
<dbReference type="PANTHER" id="PTHR11461:SF180">
    <property type="entry name" value="LEUKOCYTE ELASTASE INHIBITOR"/>
    <property type="match status" value="1"/>
</dbReference>
<dbReference type="PANTHER" id="PTHR11461">
    <property type="entry name" value="SERINE PROTEASE INHIBITOR, SERPIN"/>
    <property type="match status" value="1"/>
</dbReference>
<dbReference type="Pfam" id="PF00079">
    <property type="entry name" value="Serpin"/>
    <property type="match status" value="1"/>
</dbReference>
<dbReference type="SMART" id="SM00093">
    <property type="entry name" value="SERPIN"/>
    <property type="match status" value="1"/>
</dbReference>
<dbReference type="SUPFAM" id="SSF56574">
    <property type="entry name" value="Serpins"/>
    <property type="match status" value="1"/>
</dbReference>
<dbReference type="PROSITE" id="PS00284">
    <property type="entry name" value="SERPIN"/>
    <property type="match status" value="1"/>
</dbReference>
<accession>Q52L45</accession>
<name>ILEU_XENLA</name>